<feature type="chain" id="PRO_0000127221" description="Hypoxia-inducible factor 1-alpha">
    <location>
        <begin position="1"/>
        <end position="836"/>
    </location>
</feature>
<feature type="domain" description="bHLH" evidence="4">
    <location>
        <begin position="17"/>
        <end position="70"/>
    </location>
</feature>
<feature type="domain" description="PAS 1" evidence="3">
    <location>
        <begin position="80"/>
        <end position="155"/>
    </location>
</feature>
<feature type="domain" description="PAS 2" evidence="3">
    <location>
        <begin position="228"/>
        <end position="298"/>
    </location>
</feature>
<feature type="domain" description="PAC">
    <location>
        <begin position="302"/>
        <end position="345"/>
    </location>
</feature>
<feature type="region of interest" description="Interaction with TSGA10" evidence="8">
    <location>
        <begin position="1"/>
        <end position="401"/>
    </location>
</feature>
<feature type="region of interest" description="Disordered" evidence="5">
    <location>
        <begin position="1"/>
        <end position="30"/>
    </location>
</feature>
<feature type="region of interest" description="DNA-binding" evidence="13">
    <location>
        <begin position="21"/>
        <end position="30"/>
    </location>
</feature>
<feature type="region of interest" description="Required for heterodimer formation with ARNT" evidence="13">
    <location>
        <begin position="170"/>
        <end position="191"/>
    </location>
</feature>
<feature type="region of interest" description="N-terminal VHL recognition site">
    <location>
        <begin position="380"/>
        <end position="417"/>
    </location>
</feature>
<feature type="region of interest" description="ODD">
    <location>
        <begin position="401"/>
        <end position="613"/>
    </location>
</feature>
<feature type="region of interest" description="Disordered" evidence="5">
    <location>
        <begin position="492"/>
        <end position="511"/>
    </location>
</feature>
<feature type="region of interest" description="NTAD">
    <location>
        <begin position="544"/>
        <end position="588"/>
    </location>
</feature>
<feature type="region of interest" description="C-terminal VHL recognition site">
    <location>
        <begin position="569"/>
        <end position="585"/>
    </location>
</feature>
<feature type="region of interest" description="ID">
    <location>
        <begin position="589"/>
        <end position="795"/>
    </location>
</feature>
<feature type="region of interest" description="Disordered" evidence="5">
    <location>
        <begin position="593"/>
        <end position="684"/>
    </location>
</feature>
<feature type="region of interest" description="Disordered" evidence="5">
    <location>
        <begin position="707"/>
        <end position="734"/>
    </location>
</feature>
<feature type="region of interest" description="CTAD">
    <location>
        <begin position="796"/>
        <end position="836"/>
    </location>
</feature>
<feature type="short sequence motif" description="Nuclear localization signal" evidence="2">
    <location>
        <begin position="728"/>
        <end position="731"/>
    </location>
</feature>
<feature type="compositionally biased region" description="Basic and acidic residues" evidence="5">
    <location>
        <begin position="7"/>
        <end position="30"/>
    </location>
</feature>
<feature type="compositionally biased region" description="Polar residues" evidence="5">
    <location>
        <begin position="608"/>
        <end position="620"/>
    </location>
</feature>
<feature type="compositionally biased region" description="Low complexity" evidence="5">
    <location>
        <begin position="621"/>
        <end position="632"/>
    </location>
</feature>
<feature type="compositionally biased region" description="Basic and acidic residues" evidence="5">
    <location>
        <begin position="633"/>
        <end position="647"/>
    </location>
</feature>
<feature type="compositionally biased region" description="Polar residues" evidence="5">
    <location>
        <begin position="652"/>
        <end position="678"/>
    </location>
</feature>
<feature type="modified residue" description="Phosphoserine; by CK1" evidence="1">
    <location>
        <position position="247"/>
    </location>
</feature>
<feature type="modified residue" description="4-hydroxyproline" evidence="1">
    <location>
        <position position="402"/>
    </location>
</feature>
<feature type="modified residue" description="N6-acetyllysine; alternate" evidence="1">
    <location>
        <position position="545"/>
    </location>
</feature>
<feature type="modified residue" description="Phosphoserine; by GSK3-beta" evidence="1">
    <location>
        <position position="564"/>
    </location>
</feature>
<feature type="modified residue" description="Phosphothreonine; by GSK3-beta" evidence="1">
    <location>
        <position position="568"/>
    </location>
</feature>
<feature type="modified residue" description="4-hydroxyproline" evidence="1">
    <location>
        <position position="577"/>
    </location>
</feature>
<feature type="modified residue" description="Phosphoserine; by PLK3" evidence="1">
    <location>
        <position position="589"/>
    </location>
</feature>
<feature type="modified residue" description="Phosphoserine; by GSK3-beta" evidence="1">
    <location>
        <position position="602"/>
    </location>
</feature>
<feature type="modified residue" description="Phosphoserine; by PLK3" evidence="1">
    <location>
        <position position="668"/>
    </location>
</feature>
<feature type="modified residue" description="N6-acetyllysine" evidence="1">
    <location>
        <position position="719"/>
    </location>
</feature>
<feature type="modified residue" description="S-nitrosocysteine" evidence="1">
    <location>
        <position position="810"/>
    </location>
</feature>
<feature type="modified residue" description="(3S)-3-hydroxyasparagine" evidence="1">
    <location>
        <position position="813"/>
    </location>
</feature>
<feature type="cross-link" description="Glycyl lysine isopeptide (Lys-Gly) (interchain with G-Cter in SUMO)" evidence="1">
    <location>
        <position position="391"/>
    </location>
</feature>
<feature type="cross-link" description="Glycyl lysine isopeptide (Lys-Gly) (interchain with G-Cter in SUMO)" evidence="1">
    <location>
        <position position="476"/>
    </location>
</feature>
<feature type="cross-link" description="Glycyl lysine isopeptide (Lys-Gly) (interchain with G-Cter in ubiquitin)" evidence="1">
    <location>
        <position position="545"/>
    </location>
</feature>
<feature type="cross-link" description="Glycyl lysine isopeptide (Lys-Gly) (interchain with G-Cter in ubiquitin); alternate" evidence="1 15">
    <location>
        <position position="545"/>
    </location>
</feature>
<feature type="cross-link" description="Glycyl lysine isopeptide (Lys-Gly) (interchain with G-Cter in ubiquitin)" evidence="1 15">
    <location>
        <position position="551"/>
    </location>
</feature>
<feature type="cross-link" description="Glycyl lysine isopeptide (Lys-Gly) (interchain with G-Cter in ubiquitin)" evidence="1 15">
    <location>
        <position position="560"/>
    </location>
</feature>
<feature type="splice variant" id="VSP_007739" description="In isoform 2." evidence="14">
    <location>
        <begin position="512"/>
        <end position="525"/>
    </location>
</feature>
<feature type="mutagenesis site" description="Decreases heterodimer formation with ARNT. Impairs heterodimer formation with ARNT; when associated with D-191." evidence="13">
    <original>R</original>
    <variation>A</variation>
    <location>
        <position position="170"/>
    </location>
</feature>
<feature type="mutagenesis site" description="Decreases heterodimer formation with ARNT. Impairs heterodimer formation with ARNT; when associated with A-170." evidence="13">
    <original>V</original>
    <variation>D</variation>
    <location>
        <position position="191"/>
    </location>
</feature>
<feature type="sequence conflict" description="In Ref. 4; BAC28578." evidence="15" ref="4">
    <original>K</original>
    <variation>NR</variation>
    <location>
        <position position="12"/>
    </location>
</feature>
<feature type="sequence conflict" description="In Ref. 1; AAC52730." evidence="15" ref="1">
    <original>S</original>
    <variation>T</variation>
    <location>
        <position position="31"/>
    </location>
</feature>
<feature type="sequence conflict" description="In Ref. 1; AAC52730 and 6; CAA64833." evidence="15" ref="1 6">
    <original>T</original>
    <variation>A</variation>
    <location>
        <position position="128"/>
    </location>
</feature>
<feature type="sequence conflict" description="In Ref. 1; AAC52730." evidence="15" ref="1">
    <original>I</original>
    <variation>L</variation>
    <location>
        <position position="351"/>
    </location>
</feature>
<feature type="sequence conflict" description="In Ref. 5; AAH26139." evidence="15" ref="5">
    <original>M</original>
    <variation>K</variation>
    <location>
        <position position="369"/>
    </location>
</feature>
<feature type="sequence conflict" description="In Ref. 5; AAH26139." evidence="15" ref="5">
    <original>D</original>
    <variation>A</variation>
    <location>
        <position position="382"/>
    </location>
</feature>
<feature type="sequence conflict" description="In Ref. 4; BAC28578." evidence="15" ref="4">
    <original>L</original>
    <variation>H</variation>
    <location>
        <position position="397"/>
    </location>
</feature>
<feature type="sequence conflict" description="In Ref. 4; BAC28578." evidence="15" ref="4">
    <original>D</original>
    <variation>G</variation>
    <location>
        <position position="569"/>
    </location>
</feature>
<feature type="sequence conflict" description="In Ref. 4; BAC28305." evidence="15" ref="4">
    <original>Q</original>
    <variation>K</variation>
    <location>
        <position position="660"/>
    </location>
</feature>
<feature type="sequence conflict" description="In Ref. 1; AAC52730 and 2; AAC53455/AAC53461." evidence="15" ref="1 2">
    <original>N</original>
    <variation>K</variation>
    <location>
        <position position="700"/>
    </location>
</feature>
<feature type="sequence conflict" description="In Ref. 6; CAA64833." evidence="15" ref="6">
    <original>E</original>
    <variation>V</variation>
    <location>
        <position position="799"/>
    </location>
</feature>
<protein>
    <recommendedName>
        <fullName>Hypoxia-inducible factor 1-alpha</fullName>
        <shortName>HIF-1-alpha</shortName>
        <shortName>HIF1-alpha</shortName>
    </recommendedName>
    <alternativeName>
        <fullName>ARNT-interacting protein</fullName>
    </alternativeName>
</protein>
<reference key="1">
    <citation type="journal article" date="1996" name="J. Biol. Chem.">
        <title>Induction of phosphoglycerate kinase 1 gene expression by hypoxia. Roles of Arnt and HIF1alpha.</title>
        <authorList>
            <person name="Li H."/>
            <person name="Ko H.P."/>
            <person name="Whitlock J.P. Jr."/>
        </authorList>
    </citation>
    <scope>NUCLEOTIDE SEQUENCE [GENOMIC DNA] (ISOFORM 2)</scope>
    <source>
        <strain>C57BL/6J</strain>
        <tissue>Hepatocyte</tissue>
    </source>
</reference>
<reference key="2">
    <citation type="journal article" date="1997" name="Gene Expr.">
        <title>Molecular characterization of the murine Hif-1 alpha locus.</title>
        <authorList>
            <person name="Luo G."/>
            <person name="Gu Y.-Z."/>
            <person name="Jain S."/>
            <person name="Chan W.K."/>
            <person name="Carr K.M."/>
            <person name="Hogenesch J.B."/>
            <person name="Bradfield C.A."/>
        </authorList>
    </citation>
    <scope>NUCLEOTIDE SEQUENCE [GENOMIC DNA / MRNA] (ISOFORM 1)</scope>
    <source>
        <strain>129/SvJ</strain>
    </source>
</reference>
<reference key="3">
    <citation type="journal article" date="1997" name="Eur. J. Biochem.">
        <title>The mouse gene for hypoxia-inducible factor-1alpha. Genomic organization, expression and characterization of an alternative first exon and 5' flanking sequence.</title>
        <authorList>
            <person name="Wenger R.H."/>
            <person name="Rolfs A."/>
            <person name="Kvietikova I."/>
            <person name="Spielmann P."/>
            <person name="Zimmermann D.R."/>
            <person name="Gassmann M."/>
        </authorList>
    </citation>
    <scope>NUCLEOTIDE SEQUENCE [GENOMIC DNA] (ISOFORM 2)</scope>
    <source>
        <strain>129/Sv</strain>
    </source>
</reference>
<reference key="4">
    <citation type="journal article" date="2005" name="Science">
        <title>The transcriptional landscape of the mammalian genome.</title>
        <authorList>
            <person name="Carninci P."/>
            <person name="Kasukawa T."/>
            <person name="Katayama S."/>
            <person name="Gough J."/>
            <person name="Frith M.C."/>
            <person name="Maeda N."/>
            <person name="Oyama R."/>
            <person name="Ravasi T."/>
            <person name="Lenhard B."/>
            <person name="Wells C."/>
            <person name="Kodzius R."/>
            <person name="Shimokawa K."/>
            <person name="Bajic V.B."/>
            <person name="Brenner S.E."/>
            <person name="Batalov S."/>
            <person name="Forrest A.R."/>
            <person name="Zavolan M."/>
            <person name="Davis M.J."/>
            <person name="Wilming L.G."/>
            <person name="Aidinis V."/>
            <person name="Allen J.E."/>
            <person name="Ambesi-Impiombato A."/>
            <person name="Apweiler R."/>
            <person name="Aturaliya R.N."/>
            <person name="Bailey T.L."/>
            <person name="Bansal M."/>
            <person name="Baxter L."/>
            <person name="Beisel K.W."/>
            <person name="Bersano T."/>
            <person name="Bono H."/>
            <person name="Chalk A.M."/>
            <person name="Chiu K.P."/>
            <person name="Choudhary V."/>
            <person name="Christoffels A."/>
            <person name="Clutterbuck D.R."/>
            <person name="Crowe M.L."/>
            <person name="Dalla E."/>
            <person name="Dalrymple B.P."/>
            <person name="de Bono B."/>
            <person name="Della Gatta G."/>
            <person name="di Bernardo D."/>
            <person name="Down T."/>
            <person name="Engstrom P."/>
            <person name="Fagiolini M."/>
            <person name="Faulkner G."/>
            <person name="Fletcher C.F."/>
            <person name="Fukushima T."/>
            <person name="Furuno M."/>
            <person name="Futaki S."/>
            <person name="Gariboldi M."/>
            <person name="Georgii-Hemming P."/>
            <person name="Gingeras T.R."/>
            <person name="Gojobori T."/>
            <person name="Green R.E."/>
            <person name="Gustincich S."/>
            <person name="Harbers M."/>
            <person name="Hayashi Y."/>
            <person name="Hensch T.K."/>
            <person name="Hirokawa N."/>
            <person name="Hill D."/>
            <person name="Huminiecki L."/>
            <person name="Iacono M."/>
            <person name="Ikeo K."/>
            <person name="Iwama A."/>
            <person name="Ishikawa T."/>
            <person name="Jakt M."/>
            <person name="Kanapin A."/>
            <person name="Katoh M."/>
            <person name="Kawasawa Y."/>
            <person name="Kelso J."/>
            <person name="Kitamura H."/>
            <person name="Kitano H."/>
            <person name="Kollias G."/>
            <person name="Krishnan S.P."/>
            <person name="Kruger A."/>
            <person name="Kummerfeld S.K."/>
            <person name="Kurochkin I.V."/>
            <person name="Lareau L.F."/>
            <person name="Lazarevic D."/>
            <person name="Lipovich L."/>
            <person name="Liu J."/>
            <person name="Liuni S."/>
            <person name="McWilliam S."/>
            <person name="Madan Babu M."/>
            <person name="Madera M."/>
            <person name="Marchionni L."/>
            <person name="Matsuda H."/>
            <person name="Matsuzawa S."/>
            <person name="Miki H."/>
            <person name="Mignone F."/>
            <person name="Miyake S."/>
            <person name="Morris K."/>
            <person name="Mottagui-Tabar S."/>
            <person name="Mulder N."/>
            <person name="Nakano N."/>
            <person name="Nakauchi H."/>
            <person name="Ng P."/>
            <person name="Nilsson R."/>
            <person name="Nishiguchi S."/>
            <person name="Nishikawa S."/>
            <person name="Nori F."/>
            <person name="Ohara O."/>
            <person name="Okazaki Y."/>
            <person name="Orlando V."/>
            <person name="Pang K.C."/>
            <person name="Pavan W.J."/>
            <person name="Pavesi G."/>
            <person name="Pesole G."/>
            <person name="Petrovsky N."/>
            <person name="Piazza S."/>
            <person name="Reed J."/>
            <person name="Reid J.F."/>
            <person name="Ring B.Z."/>
            <person name="Ringwald M."/>
            <person name="Rost B."/>
            <person name="Ruan Y."/>
            <person name="Salzberg S.L."/>
            <person name="Sandelin A."/>
            <person name="Schneider C."/>
            <person name="Schoenbach C."/>
            <person name="Sekiguchi K."/>
            <person name="Semple C.A."/>
            <person name="Seno S."/>
            <person name="Sessa L."/>
            <person name="Sheng Y."/>
            <person name="Shibata Y."/>
            <person name="Shimada H."/>
            <person name="Shimada K."/>
            <person name="Silva D."/>
            <person name="Sinclair B."/>
            <person name="Sperling S."/>
            <person name="Stupka E."/>
            <person name="Sugiura K."/>
            <person name="Sultana R."/>
            <person name="Takenaka Y."/>
            <person name="Taki K."/>
            <person name="Tammoja K."/>
            <person name="Tan S.L."/>
            <person name="Tang S."/>
            <person name="Taylor M.S."/>
            <person name="Tegner J."/>
            <person name="Teichmann S.A."/>
            <person name="Ueda H.R."/>
            <person name="van Nimwegen E."/>
            <person name="Verardo R."/>
            <person name="Wei C.L."/>
            <person name="Yagi K."/>
            <person name="Yamanishi H."/>
            <person name="Zabarovsky E."/>
            <person name="Zhu S."/>
            <person name="Zimmer A."/>
            <person name="Hide W."/>
            <person name="Bult C."/>
            <person name="Grimmond S.M."/>
            <person name="Teasdale R.D."/>
            <person name="Liu E.T."/>
            <person name="Brusic V."/>
            <person name="Quackenbush J."/>
            <person name="Wahlestedt C."/>
            <person name="Mattick J.S."/>
            <person name="Hume D.A."/>
            <person name="Kai C."/>
            <person name="Sasaki D."/>
            <person name="Tomaru Y."/>
            <person name="Fukuda S."/>
            <person name="Kanamori-Katayama M."/>
            <person name="Suzuki M."/>
            <person name="Aoki J."/>
            <person name="Arakawa T."/>
            <person name="Iida J."/>
            <person name="Imamura K."/>
            <person name="Itoh M."/>
            <person name="Kato T."/>
            <person name="Kawaji H."/>
            <person name="Kawagashira N."/>
            <person name="Kawashima T."/>
            <person name="Kojima M."/>
            <person name="Kondo S."/>
            <person name="Konno H."/>
            <person name="Nakano K."/>
            <person name="Ninomiya N."/>
            <person name="Nishio T."/>
            <person name="Okada M."/>
            <person name="Plessy C."/>
            <person name="Shibata K."/>
            <person name="Shiraki T."/>
            <person name="Suzuki S."/>
            <person name="Tagami M."/>
            <person name="Waki K."/>
            <person name="Watahiki A."/>
            <person name="Okamura-Oho Y."/>
            <person name="Suzuki H."/>
            <person name="Kawai J."/>
            <person name="Hayashizaki Y."/>
        </authorList>
    </citation>
    <scope>NUCLEOTIDE SEQUENCE [LARGE SCALE MRNA] (ISOFORM 1)</scope>
    <source>
        <strain>C57BL/6J</strain>
        <tissue>Colon</tissue>
        <tissue>Diencephalon</tissue>
        <tissue>Embryo</tissue>
        <tissue>Skin</tissue>
    </source>
</reference>
<reference key="5">
    <citation type="journal article" date="2004" name="Genome Res.">
        <title>The status, quality, and expansion of the NIH full-length cDNA project: the Mammalian Gene Collection (MGC).</title>
        <authorList>
            <consortium name="The MGC Project Team"/>
        </authorList>
    </citation>
    <scope>NUCLEOTIDE SEQUENCE [LARGE SCALE MRNA] (ISOFORM 1)</scope>
    <source>
        <tissue>Mammary tumor</tissue>
    </source>
</reference>
<reference key="6">
    <citation type="journal article" date="1996" name="Biochem. Biophys. Res. Commun.">
        <title>Nucleotide sequence, chromosomal assignment and mRNA expression of mouse hypoxia-inducible factor-1 alpha.</title>
        <authorList>
            <person name="Wenger R.H."/>
            <person name="Rolfs A."/>
            <person name="Marti H.H."/>
            <person name="Guenet J.-L."/>
            <person name="Gassmann M."/>
        </authorList>
    </citation>
    <scope>NUCLEOTIDE SEQUENCE [MRNA] OF 13-822 (ISOFORM 2)</scope>
    <source>
        <tissue>Hepatocyte</tissue>
    </source>
</reference>
<reference key="7">
    <citation type="submission" date="1996-01" db="EMBL/GenBank/DDBJ databases">
        <authorList>
            <person name="O'Rourke J.F."/>
        </authorList>
    </citation>
    <scope>NUCLEOTIDE SEQUENCE [MRNA] OF 22-85</scope>
    <source>
        <tissue>Hepatocyte</tissue>
    </source>
</reference>
<reference key="8">
    <citation type="journal article" date="2002" name="J. Biol. Chem.">
        <title>Jab1 interacts directly with HIF-1alpha and regulates its stability.</title>
        <authorList>
            <person name="Bae M.-K."/>
            <person name="Ahn M.-Y."/>
            <person name="Jeong J.-W."/>
            <person name="Bae M.-H."/>
            <person name="Lee Y.M."/>
            <person name="Bae S.-K."/>
            <person name="Park J.-W."/>
            <person name="Kim K.-R."/>
            <person name="Kim K.-W."/>
        </authorList>
    </citation>
    <scope>INTERACTION WITH COPS5</scope>
</reference>
<reference key="9">
    <citation type="journal article" date="2004" name="FEBS Lett.">
        <title>Increase of SUMO-1 expression in response to hypoxia: direct interaction with HIF-1alpha in adult mouse brain and heart in vivo.</title>
        <authorList>
            <person name="Shao R."/>
            <person name="Zhang F.-P."/>
            <person name="Tian F."/>
            <person name="Anders Friberg P."/>
            <person name="Wang X."/>
            <person name="Sjoeland H."/>
            <person name="Billig H."/>
        </authorList>
    </citation>
    <scope>SUMOYLATION</scope>
    <scope>SUBCELLULAR LOCATION</scope>
    <scope>INDUCTION</scope>
    <scope>FUNCTION</scope>
</reference>
<reference key="10">
    <citation type="journal article" date="2006" name="FEBS Lett.">
        <title>TSGA10 prevents nuclear localization of the hypoxia-inducible factor (HIF)-1alpha.</title>
        <authorList>
            <person name="Haegele S."/>
            <person name="Behnam B."/>
            <person name="Borter E."/>
            <person name="Wolfe J."/>
            <person name="Paasch U."/>
            <person name="Lukashev D."/>
            <person name="Sitkovsky M."/>
            <person name="Wenger R.H."/>
            <person name="Katschinski D.M."/>
        </authorList>
    </citation>
    <scope>INTERACTION WITH TSGA10</scope>
</reference>
<reference key="11">
    <citation type="journal article" date="2007" name="Cell">
        <title>SUMO-specific protease 1 is essential for stabilization of HIF1alpha during hypoxia.</title>
        <authorList>
            <person name="Cheng J."/>
            <person name="Kang X."/>
            <person name="Zhang S."/>
            <person name="Yeh E.T.H."/>
        </authorList>
    </citation>
    <scope>DESUMOYLATION</scope>
    <scope>FUNCTION</scope>
    <scope>INTERACTION WITH SENP1</scope>
</reference>
<reference key="12">
    <citation type="journal article" date="2010" name="J. Biol. Chem.">
        <title>Plk3 functions as an essential component of the hypoxia regulatory pathway by direct phosphorylation of HIF-1alpha.</title>
        <authorList>
            <person name="Xu D."/>
            <person name="Yao Y."/>
            <person name="Lu L."/>
            <person name="Costa M."/>
            <person name="Dai W."/>
        </authorList>
    </citation>
    <scope>PHOSPHORYLATION BY PLK3</scope>
</reference>
<reference key="13">
    <citation type="journal article" date="2011" name="Cell Death Differ.">
        <title>Pro-apoptotic activity of inhibitory PAS domain protein (IPAS), a negative regulator of HIF-1, through binding to pro-survival Bcl-2 family proteins.</title>
        <authorList>
            <person name="Torii S."/>
            <person name="Goto Y."/>
            <person name="Ishizawa T."/>
            <person name="Hoshi H."/>
            <person name="Goryo K."/>
            <person name="Yasumoto K."/>
            <person name="Fukumura H."/>
            <person name="Sogawa K."/>
        </authorList>
    </citation>
    <scope>INTERACTION WITH HIF3A</scope>
    <scope>SUBCELLULAR LOCATION</scope>
</reference>
<reference key="14">
    <citation type="journal article" date="2012" name="Endocr. Relat. Cancer">
        <title>RSUME is implicated in HIF-1-induced VEGF-A production in pituitary tumour cells.</title>
        <authorList>
            <person name="Shan B."/>
            <person name="Gerez J."/>
            <person name="Haedo M."/>
            <person name="Fuertes M."/>
            <person name="Theodoropoulou M."/>
            <person name="Buchfelder M."/>
            <person name="Losa M."/>
            <person name="Stalla G.K."/>
            <person name="Arzt E."/>
            <person name="Renner U."/>
        </authorList>
    </citation>
    <scope>FUNCTION</scope>
</reference>
<reference evidence="16" key="15">
    <citation type="journal article" date="2015" name="Nature">
        <title>Structural integration in hypoxia-inducible factors.</title>
        <authorList>
            <person name="Wu D."/>
            <person name="Potluri N."/>
            <person name="Lu J."/>
            <person name="Kim Y."/>
            <person name="Rastinejad F."/>
        </authorList>
    </citation>
    <scope>X-RAY CRYSTALLOGRAPHY (3.90 ANGSTROMS) OF 13-357 IN COMPLEXES WITH ARNT AND DNA</scope>
    <scope>MUTAGENESIS OF ARG-170 AND VAL-191</scope>
    <scope>REGION</scope>
    <scope>INTERACTION WITH ARNT</scope>
    <scope>FUNCTION</scope>
</reference>
<organism>
    <name type="scientific">Mus musculus</name>
    <name type="common">Mouse</name>
    <dbReference type="NCBI Taxonomy" id="10090"/>
    <lineage>
        <taxon>Eukaryota</taxon>
        <taxon>Metazoa</taxon>
        <taxon>Chordata</taxon>
        <taxon>Craniata</taxon>
        <taxon>Vertebrata</taxon>
        <taxon>Euteleostomi</taxon>
        <taxon>Mammalia</taxon>
        <taxon>Eutheria</taxon>
        <taxon>Euarchontoglires</taxon>
        <taxon>Glires</taxon>
        <taxon>Rodentia</taxon>
        <taxon>Myomorpha</taxon>
        <taxon>Muroidea</taxon>
        <taxon>Muridae</taxon>
        <taxon>Murinae</taxon>
        <taxon>Mus</taxon>
        <taxon>Mus</taxon>
    </lineage>
</organism>
<gene>
    <name type="primary">Hif1a</name>
</gene>
<accession>Q61221</accession>
<accession>O08741</accession>
<accession>O08993</accession>
<accession>Q61664</accession>
<accession>Q61665</accession>
<accession>Q8C681</accession>
<accession>Q8CC19</accession>
<accession>Q8CCB6</accession>
<accession>Q8R385</accession>
<accession>Q9CYA8</accession>
<keyword id="KW-0002">3D-structure</keyword>
<keyword id="KW-0007">Acetylation</keyword>
<keyword id="KW-0010">Activator</keyword>
<keyword id="KW-0025">Alternative splicing</keyword>
<keyword id="KW-0963">Cytoplasm</keyword>
<keyword id="KW-0238">DNA-binding</keyword>
<keyword id="KW-0379">Hydroxylation</keyword>
<keyword id="KW-1017">Isopeptide bond</keyword>
<keyword id="KW-0539">Nucleus</keyword>
<keyword id="KW-0597">Phosphoprotein</keyword>
<keyword id="KW-1185">Reference proteome</keyword>
<keyword id="KW-0677">Repeat</keyword>
<keyword id="KW-0702">S-nitrosylation</keyword>
<keyword id="KW-0804">Transcription</keyword>
<keyword id="KW-0805">Transcription regulation</keyword>
<keyword id="KW-0832">Ubl conjugation</keyword>
<name>HIF1A_MOUSE</name>
<sequence>MEGAGGENEKKKMSSERRKEKSRDAARSRRSKESEVFYELAHQLPLPHNVSSHLDKASVMRLTISYLRVRKLLDAGGLDSEDEMKAQMDCFYLKALDGFVMVLTDDGDMVYISDNVNKYMGLTQFELTGHSVFDFTHPCDHEEMREMLTHRNGPVRKGKELNTQRSFFLRMKCTLTSRGRTMNIKSATWKVLHCTGHIHVYDTNSNQPQCGYKKPPMTCLVLICEPIPHPSNIEIPLDSKTFLSRHSLDMKFSYCDERITELMGYEPEELLGRSIYEYYHALDSDHLTKTHHDMFTKGQVTTGQYRMLAKRGGYVWVETQATVIYNTKNSQPQCIVCVNYVVSGIIQHDLIFSLQQTESVLKPVESSDMKMTQLFTKVESEDTSCLFDKLKKEPDALTLLAPAAGDTIISLDFGSDDTETEDQQLEDVPLYNDVMFPSSNEKLNINLAMSPLPSSETPKPLRSSADPALNQEVALKLESSPESLGLSFTMPQIQDQPASPSDGSTRQSSPERLLQENVNTPNFSQPNSPSEYCFDVDSDMVNVFKLELVEKLFAEDTEAKNPFSTQDTDLDLEMLAPYIPMDDDFQLRSFDQLSPLESNSPSPPSMSTVTGFQQTQLQKPTITATATTTATTDESKTETKDNKEDIKILIASPSSTQVPQETTTAKASAYSGTHSRTASPDRAGKRVIEQTDKAHPRSLNLSATLNQRNTVPEEELNPKTIASQNAQRKRKMEHDGSLFQAAGIGTLLQQPGDCAPTMSLSWKRVKGFISSEQNGTEQKTIILIPSDLACRLLGQSMDESGLPQLTSYDCEVNAPIQGSRNLLQGEELLRALDQVN</sequence>
<dbReference type="EMBL" id="U59496">
    <property type="protein sequence ID" value="AAC52730.1"/>
    <property type="molecule type" value="Genomic_DNA"/>
</dbReference>
<dbReference type="EMBL" id="AF003695">
    <property type="protein sequence ID" value="AAC53455.1"/>
    <property type="molecule type" value="mRNA"/>
</dbReference>
<dbReference type="EMBL" id="AF004155">
    <property type="protein sequence ID" value="AAC53461.1"/>
    <property type="molecule type" value="Genomic_DNA"/>
</dbReference>
<dbReference type="EMBL" id="AF004141">
    <property type="protein sequence ID" value="AAC53461.1"/>
    <property type="status" value="JOINED"/>
    <property type="molecule type" value="Genomic_DNA"/>
</dbReference>
<dbReference type="EMBL" id="AF004142">
    <property type="protein sequence ID" value="AAC53461.1"/>
    <property type="status" value="JOINED"/>
    <property type="molecule type" value="Genomic_DNA"/>
</dbReference>
<dbReference type="EMBL" id="AF004143">
    <property type="protein sequence ID" value="AAC53461.1"/>
    <property type="status" value="JOINED"/>
    <property type="molecule type" value="Genomic_DNA"/>
</dbReference>
<dbReference type="EMBL" id="AF004144">
    <property type="protein sequence ID" value="AAC53461.1"/>
    <property type="status" value="JOINED"/>
    <property type="molecule type" value="Genomic_DNA"/>
</dbReference>
<dbReference type="EMBL" id="AF004145">
    <property type="protein sequence ID" value="AAC53461.1"/>
    <property type="status" value="JOINED"/>
    <property type="molecule type" value="Genomic_DNA"/>
</dbReference>
<dbReference type="EMBL" id="AF004146">
    <property type="protein sequence ID" value="AAC53461.1"/>
    <property type="status" value="JOINED"/>
    <property type="molecule type" value="Genomic_DNA"/>
</dbReference>
<dbReference type="EMBL" id="AF004147">
    <property type="protein sequence ID" value="AAC53461.1"/>
    <property type="status" value="JOINED"/>
    <property type="molecule type" value="Genomic_DNA"/>
</dbReference>
<dbReference type="EMBL" id="AF004148">
    <property type="protein sequence ID" value="AAC53461.1"/>
    <property type="status" value="JOINED"/>
    <property type="molecule type" value="Genomic_DNA"/>
</dbReference>
<dbReference type="EMBL" id="AF004149">
    <property type="protein sequence ID" value="AAC53461.1"/>
    <property type="status" value="JOINED"/>
    <property type="molecule type" value="Genomic_DNA"/>
</dbReference>
<dbReference type="EMBL" id="AF004150">
    <property type="protein sequence ID" value="AAC53461.1"/>
    <property type="status" value="JOINED"/>
    <property type="molecule type" value="Genomic_DNA"/>
</dbReference>
<dbReference type="EMBL" id="AF004151">
    <property type="protein sequence ID" value="AAC53461.1"/>
    <property type="status" value="JOINED"/>
    <property type="molecule type" value="Genomic_DNA"/>
</dbReference>
<dbReference type="EMBL" id="AF004152">
    <property type="protein sequence ID" value="AAC53461.1"/>
    <property type="status" value="JOINED"/>
    <property type="molecule type" value="Genomic_DNA"/>
</dbReference>
<dbReference type="EMBL" id="AF004153">
    <property type="protein sequence ID" value="AAC53461.1"/>
    <property type="status" value="JOINED"/>
    <property type="molecule type" value="Genomic_DNA"/>
</dbReference>
<dbReference type="EMBL" id="AF004154">
    <property type="protein sequence ID" value="AAC53461.1"/>
    <property type="status" value="JOINED"/>
    <property type="molecule type" value="Genomic_DNA"/>
</dbReference>
<dbReference type="EMBL" id="Y09085">
    <property type="protein sequence ID" value="CAA70305.1"/>
    <property type="molecule type" value="Genomic_DNA"/>
</dbReference>
<dbReference type="EMBL" id="Y09085">
    <property type="protein sequence ID" value="CAA70306.1"/>
    <property type="molecule type" value="Genomic_DNA"/>
</dbReference>
<dbReference type="EMBL" id="Y13656">
    <property type="protein sequence ID" value="CAA70306.1"/>
    <property type="status" value="JOINED"/>
    <property type="molecule type" value="Genomic_DNA"/>
</dbReference>
<dbReference type="EMBL" id="AK034087">
    <property type="protein sequence ID" value="BAC28578.1"/>
    <property type="molecule type" value="mRNA"/>
</dbReference>
<dbReference type="EMBL" id="AK076395">
    <property type="protein sequence ID" value="BAC36320.1"/>
    <property type="molecule type" value="mRNA"/>
</dbReference>
<dbReference type="EMBL" id="AK033471">
    <property type="protein sequence ID" value="BAC28305.1"/>
    <property type="molecule type" value="mRNA"/>
</dbReference>
<dbReference type="EMBL" id="AK017853">
    <property type="protein sequence ID" value="BAB30975.1"/>
    <property type="molecule type" value="mRNA"/>
</dbReference>
<dbReference type="EMBL" id="BC026139">
    <property type="protein sequence ID" value="AAH26139.1"/>
    <property type="molecule type" value="mRNA"/>
</dbReference>
<dbReference type="EMBL" id="X95580">
    <property type="protein sequence ID" value="CAA64833.1"/>
    <property type="molecule type" value="mRNA"/>
</dbReference>
<dbReference type="EMBL" id="X95002">
    <property type="protein sequence ID" value="CAA64458.1"/>
    <property type="molecule type" value="mRNA"/>
</dbReference>
<dbReference type="CCDS" id="CCDS25977.1">
    <molecule id="Q61221-1"/>
</dbReference>
<dbReference type="PIR" id="JC4837">
    <property type="entry name" value="JC4837"/>
</dbReference>
<dbReference type="RefSeq" id="NP_001300848.1">
    <property type="nucleotide sequence ID" value="NM_001313919.1"/>
</dbReference>
<dbReference type="RefSeq" id="NP_001300849.1">
    <property type="nucleotide sequence ID" value="NM_001313920.1"/>
</dbReference>
<dbReference type="RefSeq" id="NP_001409072.1">
    <molecule id="Q61221-2"/>
    <property type="nucleotide sequence ID" value="NM_001422143.1"/>
</dbReference>
<dbReference type="RefSeq" id="NP_034561.2">
    <molecule id="Q61221-1"/>
    <property type="nucleotide sequence ID" value="NM_010431.3"/>
</dbReference>
<dbReference type="RefSeq" id="XP_017170450.1">
    <property type="nucleotide sequence ID" value="XM_017314961.1"/>
</dbReference>
<dbReference type="PDB" id="4ZPR">
    <property type="method" value="X-ray"/>
    <property type="resolution" value="3.90 A"/>
    <property type="chains" value="B=13-357"/>
</dbReference>
<dbReference type="PDBsum" id="4ZPR"/>
<dbReference type="SMR" id="Q61221"/>
<dbReference type="BioGRID" id="200304">
    <property type="interactions" value="27"/>
</dbReference>
<dbReference type="DIP" id="DIP-31083N"/>
<dbReference type="FunCoup" id="Q61221">
    <property type="interactions" value="2601"/>
</dbReference>
<dbReference type="IntAct" id="Q61221">
    <property type="interactions" value="17"/>
</dbReference>
<dbReference type="MINT" id="Q61221"/>
<dbReference type="STRING" id="10090.ENSMUSP00000021530"/>
<dbReference type="BindingDB" id="Q61221"/>
<dbReference type="ChEMBL" id="CHEMBL6046"/>
<dbReference type="iPTMnet" id="Q61221"/>
<dbReference type="PhosphoSitePlus" id="Q61221"/>
<dbReference type="SwissPalm" id="Q61221"/>
<dbReference type="PaxDb" id="10090-ENSMUSP00000021530"/>
<dbReference type="ProteomicsDB" id="273106">
    <molecule id="Q61221-1"/>
</dbReference>
<dbReference type="ProteomicsDB" id="273107">
    <molecule id="Q61221-2"/>
</dbReference>
<dbReference type="Antibodypedia" id="84">
    <property type="antibodies" value="2320 antibodies from 52 providers"/>
</dbReference>
<dbReference type="DNASU" id="15251"/>
<dbReference type="Ensembl" id="ENSMUST00000021530.8">
    <molecule id="Q61221-1"/>
    <property type="protein sequence ID" value="ENSMUSP00000021530.8"/>
    <property type="gene ID" value="ENSMUSG00000021109.14"/>
</dbReference>
<dbReference type="GeneID" id="15251"/>
<dbReference type="KEGG" id="mmu:15251"/>
<dbReference type="UCSC" id="uc007nwo.2">
    <molecule id="Q61221-2"/>
    <property type="organism name" value="mouse"/>
</dbReference>
<dbReference type="UCSC" id="uc007nwq.2">
    <molecule id="Q61221-1"/>
    <property type="organism name" value="mouse"/>
</dbReference>
<dbReference type="AGR" id="MGI:106918"/>
<dbReference type="CTD" id="3091"/>
<dbReference type="MGI" id="MGI:106918">
    <property type="gene designation" value="Hif1a"/>
</dbReference>
<dbReference type="VEuPathDB" id="HostDB:ENSMUSG00000021109"/>
<dbReference type="eggNOG" id="KOG3558">
    <property type="taxonomic scope" value="Eukaryota"/>
</dbReference>
<dbReference type="GeneTree" id="ENSGT00940000156774"/>
<dbReference type="InParanoid" id="Q61221"/>
<dbReference type="OMA" id="IRVYENC"/>
<dbReference type="OrthoDB" id="6021714at2759"/>
<dbReference type="PhylomeDB" id="Q61221"/>
<dbReference type="TreeFam" id="TF317772"/>
<dbReference type="Reactome" id="R-MMU-1234158">
    <property type="pathway name" value="Regulation of gene expression by Hypoxia-inducible Factor"/>
</dbReference>
<dbReference type="Reactome" id="R-MMU-1234174">
    <property type="pathway name" value="Cellular response to hypoxia"/>
</dbReference>
<dbReference type="Reactome" id="R-MMU-1234176">
    <property type="pathway name" value="Oxygen-dependent proline hydroxylation of Hypoxia-inducible Factor Alpha"/>
</dbReference>
<dbReference type="Reactome" id="R-MMU-5689880">
    <property type="pathway name" value="Ub-specific processing proteases"/>
</dbReference>
<dbReference type="Reactome" id="R-MMU-8857538">
    <property type="pathway name" value="PTK6 promotes HIF1A stabilization"/>
</dbReference>
<dbReference type="Reactome" id="R-MMU-8951664">
    <property type="pathway name" value="Neddylation"/>
</dbReference>
<dbReference type="BioGRID-ORCS" id="15251">
    <property type="hits" value="10 hits in 84 CRISPR screens"/>
</dbReference>
<dbReference type="ChiTaRS" id="Hif1a">
    <property type="organism name" value="mouse"/>
</dbReference>
<dbReference type="EvolutionaryTrace" id="Q61221"/>
<dbReference type="PRO" id="PR:Q61221"/>
<dbReference type="Proteomes" id="UP000000589">
    <property type="component" value="Chromosome 12"/>
</dbReference>
<dbReference type="RNAct" id="Q61221">
    <property type="molecule type" value="protein"/>
</dbReference>
<dbReference type="Bgee" id="ENSMUSG00000021109">
    <property type="expression patterns" value="Expressed in pineal body and 288 other cell types or tissues"/>
</dbReference>
<dbReference type="ExpressionAtlas" id="Q61221">
    <property type="expression patterns" value="baseline and differential"/>
</dbReference>
<dbReference type="GO" id="GO:1904115">
    <property type="term" value="C:axon cytoplasm"/>
    <property type="evidence" value="ECO:0007669"/>
    <property type="project" value="GOC"/>
</dbReference>
<dbReference type="GO" id="GO:0005829">
    <property type="term" value="C:cytosol"/>
    <property type="evidence" value="ECO:0000250"/>
    <property type="project" value="UniProtKB"/>
</dbReference>
<dbReference type="GO" id="GO:0000791">
    <property type="term" value="C:euchromatin"/>
    <property type="evidence" value="ECO:0000314"/>
    <property type="project" value="BHF-UCL"/>
</dbReference>
<dbReference type="GO" id="GO:0031514">
    <property type="term" value="C:motile cilium"/>
    <property type="evidence" value="ECO:0000314"/>
    <property type="project" value="MGI"/>
</dbReference>
<dbReference type="GO" id="GO:0016607">
    <property type="term" value="C:nuclear speck"/>
    <property type="evidence" value="ECO:0000314"/>
    <property type="project" value="UniProtKB"/>
</dbReference>
<dbReference type="GO" id="GO:0005634">
    <property type="term" value="C:nucleus"/>
    <property type="evidence" value="ECO:0000314"/>
    <property type="project" value="UniProtKB"/>
</dbReference>
<dbReference type="GO" id="GO:0090575">
    <property type="term" value="C:RNA polymerase II transcription regulator complex"/>
    <property type="evidence" value="ECO:0007669"/>
    <property type="project" value="Ensembl"/>
</dbReference>
<dbReference type="GO" id="GO:0005667">
    <property type="term" value="C:transcription regulator complex"/>
    <property type="evidence" value="ECO:0000266"/>
    <property type="project" value="MGI"/>
</dbReference>
<dbReference type="GO" id="GO:0003677">
    <property type="term" value="F:DNA binding"/>
    <property type="evidence" value="ECO:0000314"/>
    <property type="project" value="MGI"/>
</dbReference>
<dbReference type="GO" id="GO:0001228">
    <property type="term" value="F:DNA-binding transcription activator activity, RNA polymerase II-specific"/>
    <property type="evidence" value="ECO:0000314"/>
    <property type="project" value="MGI"/>
</dbReference>
<dbReference type="GO" id="GO:0003700">
    <property type="term" value="F:DNA-binding transcription factor activity"/>
    <property type="evidence" value="ECO:0000314"/>
    <property type="project" value="MGI"/>
</dbReference>
<dbReference type="GO" id="GO:0000981">
    <property type="term" value="F:DNA-binding transcription factor activity, RNA polymerase II-specific"/>
    <property type="evidence" value="ECO:0000314"/>
    <property type="project" value="MGI"/>
</dbReference>
<dbReference type="GO" id="GO:0001217">
    <property type="term" value="F:DNA-binding transcription repressor activity"/>
    <property type="evidence" value="ECO:0007669"/>
    <property type="project" value="Ensembl"/>
</dbReference>
<dbReference type="GO" id="GO:0070888">
    <property type="term" value="F:E-box binding"/>
    <property type="evidence" value="ECO:0000315"/>
    <property type="project" value="BHF-UCL"/>
</dbReference>
<dbReference type="GO" id="GO:0042826">
    <property type="term" value="F:histone deacetylase binding"/>
    <property type="evidence" value="ECO:0000353"/>
    <property type="project" value="BHF-UCL"/>
</dbReference>
<dbReference type="GO" id="GO:0051879">
    <property type="term" value="F:Hsp90 protein binding"/>
    <property type="evidence" value="ECO:0007669"/>
    <property type="project" value="Ensembl"/>
</dbReference>
<dbReference type="GO" id="GO:0016922">
    <property type="term" value="F:nuclear receptor binding"/>
    <property type="evidence" value="ECO:0007669"/>
    <property type="project" value="Ensembl"/>
</dbReference>
<dbReference type="GO" id="GO:0002039">
    <property type="term" value="F:p53 binding"/>
    <property type="evidence" value="ECO:0007669"/>
    <property type="project" value="Ensembl"/>
</dbReference>
<dbReference type="GO" id="GO:0019904">
    <property type="term" value="F:protein domain specific binding"/>
    <property type="evidence" value="ECO:0007669"/>
    <property type="project" value="Ensembl"/>
</dbReference>
<dbReference type="GO" id="GO:0046982">
    <property type="term" value="F:protein heterodimerization activity"/>
    <property type="evidence" value="ECO:0000314"/>
    <property type="project" value="UniProtKB"/>
</dbReference>
<dbReference type="GO" id="GO:0019901">
    <property type="term" value="F:protein kinase binding"/>
    <property type="evidence" value="ECO:0007669"/>
    <property type="project" value="Ensembl"/>
</dbReference>
<dbReference type="GO" id="GO:0000978">
    <property type="term" value="F:RNA polymerase II cis-regulatory region sequence-specific DNA binding"/>
    <property type="evidence" value="ECO:0000314"/>
    <property type="project" value="BHF-UCL"/>
</dbReference>
<dbReference type="GO" id="GO:0043565">
    <property type="term" value="F:sequence-specific DNA binding"/>
    <property type="evidence" value="ECO:0000314"/>
    <property type="project" value="UniProtKB"/>
</dbReference>
<dbReference type="GO" id="GO:0001223">
    <property type="term" value="F:transcription coactivator binding"/>
    <property type="evidence" value="ECO:0000250"/>
    <property type="project" value="UniProtKB"/>
</dbReference>
<dbReference type="GO" id="GO:0140537">
    <property type="term" value="F:transcription regulator activator activity"/>
    <property type="evidence" value="ECO:0007669"/>
    <property type="project" value="Ensembl"/>
</dbReference>
<dbReference type="GO" id="GO:0031625">
    <property type="term" value="F:ubiquitin protein ligase binding"/>
    <property type="evidence" value="ECO:0007669"/>
    <property type="project" value="Ensembl"/>
</dbReference>
<dbReference type="GO" id="GO:0001525">
    <property type="term" value="P:angiogenesis"/>
    <property type="evidence" value="ECO:0000315"/>
    <property type="project" value="MGI"/>
</dbReference>
<dbReference type="GO" id="GO:0006915">
    <property type="term" value="P:apoptotic process"/>
    <property type="evidence" value="ECO:0000315"/>
    <property type="project" value="MGI"/>
</dbReference>
<dbReference type="GO" id="GO:0019896">
    <property type="term" value="P:axonal transport of mitochondrion"/>
    <property type="evidence" value="ECO:0000250"/>
    <property type="project" value="UniProtKB"/>
</dbReference>
<dbReference type="GO" id="GO:0001922">
    <property type="term" value="P:B-1 B cell homeostasis"/>
    <property type="evidence" value="ECO:0000315"/>
    <property type="project" value="MGI"/>
</dbReference>
<dbReference type="GO" id="GO:0001568">
    <property type="term" value="P:blood vessel development"/>
    <property type="evidence" value="ECO:0000315"/>
    <property type="project" value="MGI"/>
</dbReference>
<dbReference type="GO" id="GO:0048514">
    <property type="term" value="P:blood vessel morphogenesis"/>
    <property type="evidence" value="ECO:0000315"/>
    <property type="project" value="MGI"/>
</dbReference>
<dbReference type="GO" id="GO:0030282">
    <property type="term" value="P:bone mineralization"/>
    <property type="evidence" value="ECO:0000315"/>
    <property type="project" value="MGI"/>
</dbReference>
<dbReference type="GO" id="GO:0048593">
    <property type="term" value="P:camera-type eye morphogenesis"/>
    <property type="evidence" value="ECO:0000316"/>
    <property type="project" value="MGI"/>
</dbReference>
<dbReference type="GO" id="GO:0003208">
    <property type="term" value="P:cardiac ventricle morphogenesis"/>
    <property type="evidence" value="ECO:0000315"/>
    <property type="project" value="MGI"/>
</dbReference>
<dbReference type="GO" id="GO:0051216">
    <property type="term" value="P:cartilage development"/>
    <property type="evidence" value="ECO:0000315"/>
    <property type="project" value="MGI"/>
</dbReference>
<dbReference type="GO" id="GO:0030154">
    <property type="term" value="P:cell differentiation"/>
    <property type="evidence" value="ECO:0000316"/>
    <property type="project" value="MGI"/>
</dbReference>
<dbReference type="GO" id="GO:0071456">
    <property type="term" value="P:cellular response to hypoxia"/>
    <property type="evidence" value="ECO:0000316"/>
    <property type="project" value="MGI"/>
</dbReference>
<dbReference type="GO" id="GO:0071347">
    <property type="term" value="P:cellular response to interleukin-1"/>
    <property type="evidence" value="ECO:0007669"/>
    <property type="project" value="Ensembl"/>
</dbReference>
<dbReference type="GO" id="GO:0034599">
    <property type="term" value="P:cellular response to oxidative stress"/>
    <property type="evidence" value="ECO:0007669"/>
    <property type="project" value="Ensembl"/>
</dbReference>
<dbReference type="GO" id="GO:0098586">
    <property type="term" value="P:cellular response to virus"/>
    <property type="evidence" value="ECO:0007669"/>
    <property type="project" value="Ensembl"/>
</dbReference>
<dbReference type="GO" id="GO:0021987">
    <property type="term" value="P:cerebral cortex development"/>
    <property type="evidence" value="ECO:0000315"/>
    <property type="project" value="MGI"/>
</dbReference>
<dbReference type="GO" id="GO:0002062">
    <property type="term" value="P:chondrocyte differentiation"/>
    <property type="evidence" value="ECO:0000315"/>
    <property type="project" value="MGI"/>
</dbReference>
<dbReference type="GO" id="GO:0032963">
    <property type="term" value="P:collagen metabolic process"/>
    <property type="evidence" value="ECO:0000315"/>
    <property type="project" value="BHF-UCL"/>
</dbReference>
<dbReference type="GO" id="GO:0002248">
    <property type="term" value="P:connective tissue replacement involved in inflammatory response wound healing"/>
    <property type="evidence" value="ECO:0000315"/>
    <property type="project" value="BHF-UCL"/>
</dbReference>
<dbReference type="GO" id="GO:0048546">
    <property type="term" value="P:digestive tract morphogenesis"/>
    <property type="evidence" value="ECO:0000315"/>
    <property type="project" value="MGI"/>
</dbReference>
<dbReference type="GO" id="GO:0071542">
    <property type="term" value="P:dopaminergic neuron differentiation"/>
    <property type="evidence" value="ECO:0000315"/>
    <property type="project" value="MGI"/>
</dbReference>
<dbReference type="GO" id="GO:0051541">
    <property type="term" value="P:elastin metabolic process"/>
    <property type="evidence" value="ECO:0000315"/>
    <property type="project" value="BHF-UCL"/>
</dbReference>
<dbReference type="GO" id="GO:0035162">
    <property type="term" value="P:embryonic hemopoiesis"/>
    <property type="evidence" value="ECO:0000315"/>
    <property type="project" value="MGI"/>
</dbReference>
<dbReference type="GO" id="GO:0001892">
    <property type="term" value="P:embryonic placenta development"/>
    <property type="evidence" value="ECO:0000315"/>
    <property type="project" value="MGI"/>
</dbReference>
<dbReference type="GO" id="GO:0061030">
    <property type="term" value="P:epithelial cell differentiation involved in mammary gland alveolus development"/>
    <property type="evidence" value="ECO:0000315"/>
    <property type="project" value="MGI"/>
</dbReference>
<dbReference type="GO" id="GO:0001837">
    <property type="term" value="P:epithelial to mesenchymal transition"/>
    <property type="evidence" value="ECO:0000315"/>
    <property type="project" value="BHF-UCL"/>
</dbReference>
<dbReference type="GO" id="GO:0002067">
    <property type="term" value="P:glandular epithelial cell differentiation"/>
    <property type="evidence" value="ECO:0000315"/>
    <property type="project" value="MGI"/>
</dbReference>
<dbReference type="GO" id="GO:0002071">
    <property type="term" value="P:glandular epithelial cell maturation"/>
    <property type="evidence" value="ECO:0000315"/>
    <property type="project" value="MGI"/>
</dbReference>
<dbReference type="GO" id="GO:0042593">
    <property type="term" value="P:glucose homeostasis"/>
    <property type="evidence" value="ECO:0000315"/>
    <property type="project" value="MGI"/>
</dbReference>
<dbReference type="GO" id="GO:0001947">
    <property type="term" value="P:heart looping"/>
    <property type="evidence" value="ECO:0000315"/>
    <property type="project" value="MGI"/>
</dbReference>
<dbReference type="GO" id="GO:0042541">
    <property type="term" value="P:hemoglobin biosynthetic process"/>
    <property type="evidence" value="ECO:0000315"/>
    <property type="project" value="MGI"/>
</dbReference>
<dbReference type="GO" id="GO:0097411">
    <property type="term" value="P:hypoxia-inducible factor-1alpha signaling pathway"/>
    <property type="evidence" value="ECO:0000314"/>
    <property type="project" value="MGI"/>
</dbReference>
<dbReference type="GO" id="GO:0035773">
    <property type="term" value="P:insulin secretion involved in cellular response to glucose stimulus"/>
    <property type="evidence" value="ECO:0000315"/>
    <property type="project" value="MGI"/>
</dbReference>
<dbReference type="GO" id="GO:0060574">
    <property type="term" value="P:intestinal epithelial cell maturation"/>
    <property type="evidence" value="ECO:0000315"/>
    <property type="project" value="MGI"/>
</dbReference>
<dbReference type="GO" id="GO:0001678">
    <property type="term" value="P:intracellular glucose homeostasis"/>
    <property type="evidence" value="ECO:0000250"/>
    <property type="project" value="UniProtKB"/>
</dbReference>
<dbReference type="GO" id="GO:0006879">
    <property type="term" value="P:intracellular iron ion homeostasis"/>
    <property type="evidence" value="ECO:0000315"/>
    <property type="project" value="MGI"/>
</dbReference>
<dbReference type="GO" id="GO:0032364">
    <property type="term" value="P:intracellular oxygen homeostasis"/>
    <property type="evidence" value="ECO:0000315"/>
    <property type="project" value="MGI"/>
</dbReference>
<dbReference type="GO" id="GO:0061072">
    <property type="term" value="P:iris morphogenesis"/>
    <property type="evidence" value="ECO:0000316"/>
    <property type="project" value="MGI"/>
</dbReference>
<dbReference type="GO" id="GO:0006089">
    <property type="term" value="P:lactate metabolic process"/>
    <property type="evidence" value="ECO:0000315"/>
    <property type="project" value="MGI"/>
</dbReference>
<dbReference type="GO" id="GO:0007595">
    <property type="term" value="P:lactation"/>
    <property type="evidence" value="ECO:0000315"/>
    <property type="project" value="MGI"/>
</dbReference>
<dbReference type="GO" id="GO:0097152">
    <property type="term" value="P:mesenchymal cell apoptotic process"/>
    <property type="evidence" value="ECO:0000315"/>
    <property type="project" value="MGI"/>
</dbReference>
<dbReference type="GO" id="GO:0046716">
    <property type="term" value="P:muscle cell cellular homeostasis"/>
    <property type="evidence" value="ECO:0000315"/>
    <property type="project" value="MGI"/>
</dbReference>
<dbReference type="GO" id="GO:0043066">
    <property type="term" value="P:negative regulation of apoptotic process"/>
    <property type="evidence" value="ECO:0000315"/>
    <property type="project" value="MGI"/>
</dbReference>
<dbReference type="GO" id="GO:0030502">
    <property type="term" value="P:negative regulation of bone mineralization"/>
    <property type="evidence" value="ECO:0000315"/>
    <property type="project" value="MGI"/>
</dbReference>
<dbReference type="GO" id="GO:0010629">
    <property type="term" value="P:negative regulation of gene expression"/>
    <property type="evidence" value="ECO:0007669"/>
    <property type="project" value="Ensembl"/>
</dbReference>
<dbReference type="GO" id="GO:0045926">
    <property type="term" value="P:negative regulation of growth"/>
    <property type="evidence" value="ECO:0000315"/>
    <property type="project" value="MGI"/>
</dbReference>
<dbReference type="GO" id="GO:2001054">
    <property type="term" value="P:negative regulation of mesenchymal cell apoptotic process"/>
    <property type="evidence" value="ECO:0000315"/>
    <property type="project" value="MGI"/>
</dbReference>
<dbReference type="GO" id="GO:1902894">
    <property type="term" value="P:negative regulation of miRNA transcription"/>
    <property type="evidence" value="ECO:0007669"/>
    <property type="project" value="Ensembl"/>
</dbReference>
<dbReference type="GO" id="GO:0043524">
    <property type="term" value="P:negative regulation of neuron apoptotic process"/>
    <property type="evidence" value="ECO:0000315"/>
    <property type="project" value="MGI"/>
</dbReference>
<dbReference type="GO" id="GO:0030279">
    <property type="term" value="P:negative regulation of ossification"/>
    <property type="evidence" value="ECO:0000315"/>
    <property type="project" value="CACAO"/>
</dbReference>
<dbReference type="GO" id="GO:1903377">
    <property type="term" value="P:negative regulation of oxidative stress-induced neuron intrinsic apoptotic signaling pathway"/>
    <property type="evidence" value="ECO:0007669"/>
    <property type="project" value="Ensembl"/>
</dbReference>
<dbReference type="GO" id="GO:0070244">
    <property type="term" value="P:negative regulation of thymocyte apoptotic process"/>
    <property type="evidence" value="ECO:0000315"/>
    <property type="project" value="MGI"/>
</dbReference>
<dbReference type="GO" id="GO:0032007">
    <property type="term" value="P:negative regulation of TOR signaling"/>
    <property type="evidence" value="ECO:0000315"/>
    <property type="project" value="MGI"/>
</dbReference>
<dbReference type="GO" id="GO:0001755">
    <property type="term" value="P:neural crest cell migration"/>
    <property type="evidence" value="ECO:0000315"/>
    <property type="project" value="MGI"/>
</dbReference>
<dbReference type="GO" id="GO:0021502">
    <property type="term" value="P:neural fold elevation formation"/>
    <property type="evidence" value="ECO:0000315"/>
    <property type="project" value="MGI"/>
</dbReference>
<dbReference type="GO" id="GO:0007405">
    <property type="term" value="P:neuroblast proliferation"/>
    <property type="evidence" value="ECO:0000316"/>
    <property type="project" value="MGI"/>
</dbReference>
<dbReference type="GO" id="GO:0051402">
    <property type="term" value="P:neuron apoptotic process"/>
    <property type="evidence" value="ECO:0000315"/>
    <property type="project" value="MGI"/>
</dbReference>
<dbReference type="GO" id="GO:0003151">
    <property type="term" value="P:outflow tract morphogenesis"/>
    <property type="evidence" value="ECO:0000315"/>
    <property type="project" value="MGI"/>
</dbReference>
<dbReference type="GO" id="GO:0045766">
    <property type="term" value="P:positive regulation of angiogenesis"/>
    <property type="evidence" value="ECO:0007669"/>
    <property type="project" value="Ensembl"/>
</dbReference>
<dbReference type="GO" id="GO:0043536">
    <property type="term" value="P:positive regulation of blood vessel endothelial cell migration"/>
    <property type="evidence" value="ECO:0007669"/>
    <property type="project" value="Ensembl"/>
</dbReference>
<dbReference type="GO" id="GO:0070101">
    <property type="term" value="P:positive regulation of chemokine-mediated signaling pathway"/>
    <property type="evidence" value="ECO:0007669"/>
    <property type="project" value="Ensembl"/>
</dbReference>
<dbReference type="GO" id="GO:1900017">
    <property type="term" value="P:positive regulation of cytokine production involved in inflammatory response"/>
    <property type="evidence" value="ECO:0000250"/>
    <property type="project" value="UniProtKB"/>
</dbReference>
<dbReference type="GO" id="GO:0045893">
    <property type="term" value="P:positive regulation of DNA-templated transcription"/>
    <property type="evidence" value="ECO:0000250"/>
    <property type="project" value="UniProtKB"/>
</dbReference>
<dbReference type="GO" id="GO:0010634">
    <property type="term" value="P:positive regulation of epithelial cell migration"/>
    <property type="evidence" value="ECO:0000315"/>
    <property type="project" value="BHF-UCL"/>
</dbReference>
<dbReference type="GO" id="GO:0045648">
    <property type="term" value="P:positive regulation of erythrocyte differentiation"/>
    <property type="evidence" value="ECO:0000315"/>
    <property type="project" value="MGI"/>
</dbReference>
<dbReference type="GO" id="GO:0045821">
    <property type="term" value="P:positive regulation of glycolytic process"/>
    <property type="evidence" value="ECO:0007669"/>
    <property type="project" value="Ensembl"/>
</dbReference>
<dbReference type="GO" id="GO:0046886">
    <property type="term" value="P:positive regulation of hormone biosynthetic process"/>
    <property type="evidence" value="ECO:0007669"/>
    <property type="project" value="Ensembl"/>
</dbReference>
<dbReference type="GO" id="GO:0035774">
    <property type="term" value="P:positive regulation of insulin secretion involved in cellular response to glucose stimulus"/>
    <property type="evidence" value="ECO:0000315"/>
    <property type="project" value="MGI"/>
</dbReference>
<dbReference type="GO" id="GO:0016239">
    <property type="term" value="P:positive regulation of macroautophagy"/>
    <property type="evidence" value="ECO:0000315"/>
    <property type="project" value="MGI"/>
</dbReference>
<dbReference type="GO" id="GO:1902895">
    <property type="term" value="P:positive regulation of miRNA transcription"/>
    <property type="evidence" value="ECO:0000315"/>
    <property type="project" value="BHF-UCL"/>
</dbReference>
<dbReference type="GO" id="GO:0002052">
    <property type="term" value="P:positive regulation of neuroblast proliferation"/>
    <property type="evidence" value="ECO:0000316"/>
    <property type="project" value="MGI"/>
</dbReference>
<dbReference type="GO" id="GO:0045944">
    <property type="term" value="P:positive regulation of transcription by RNA polymerase II"/>
    <property type="evidence" value="ECO:0000314"/>
    <property type="project" value="BHF-UCL"/>
</dbReference>
<dbReference type="GO" id="GO:0010575">
    <property type="term" value="P:positive regulation of vascular endothelial growth factor production"/>
    <property type="evidence" value="ECO:0000250"/>
    <property type="project" value="UniProtKB"/>
</dbReference>
<dbReference type="GO" id="GO:0030949">
    <property type="term" value="P:positive regulation of vascular endothelial growth factor receptor signaling pathway"/>
    <property type="evidence" value="ECO:0000315"/>
    <property type="project" value="MGI"/>
</dbReference>
<dbReference type="GO" id="GO:0042127">
    <property type="term" value="P:regulation of cell population proliferation"/>
    <property type="evidence" value="ECO:0000315"/>
    <property type="project" value="MGI"/>
</dbReference>
<dbReference type="GO" id="GO:0006355">
    <property type="term" value="P:regulation of DNA-templated transcription"/>
    <property type="evidence" value="ECO:0000314"/>
    <property type="project" value="MGI"/>
</dbReference>
<dbReference type="GO" id="GO:0006110">
    <property type="term" value="P:regulation of glycolytic process"/>
    <property type="evidence" value="ECO:0000316"/>
    <property type="project" value="MGI"/>
</dbReference>
<dbReference type="GO" id="GO:2000434">
    <property type="term" value="P:regulation of protein neddylation"/>
    <property type="evidence" value="ECO:0000250"/>
    <property type="project" value="UniProtKB"/>
</dbReference>
<dbReference type="GO" id="GO:0070243">
    <property type="term" value="P:regulation of thymocyte apoptotic process"/>
    <property type="evidence" value="ECO:0000316"/>
    <property type="project" value="MGI"/>
</dbReference>
<dbReference type="GO" id="GO:0006357">
    <property type="term" value="P:regulation of transcription by RNA polymerase II"/>
    <property type="evidence" value="ECO:0000315"/>
    <property type="project" value="MGI"/>
</dbReference>
<dbReference type="GO" id="GO:0032909">
    <property type="term" value="P:regulation of transforming growth factor beta2 production"/>
    <property type="evidence" value="ECO:0007669"/>
    <property type="project" value="Ensembl"/>
</dbReference>
<dbReference type="GO" id="GO:0001666">
    <property type="term" value="P:response to hypoxia"/>
    <property type="evidence" value="ECO:0000314"/>
    <property type="project" value="MGI"/>
</dbReference>
<dbReference type="GO" id="GO:0010039">
    <property type="term" value="P:response to iron ion"/>
    <property type="evidence" value="ECO:0007669"/>
    <property type="project" value="Ensembl"/>
</dbReference>
<dbReference type="GO" id="GO:0014850">
    <property type="term" value="P:response to muscle activity"/>
    <property type="evidence" value="ECO:0000315"/>
    <property type="project" value="MGI"/>
</dbReference>
<dbReference type="GO" id="GO:0000302">
    <property type="term" value="P:response to reactive oxygen species"/>
    <property type="evidence" value="ECO:0000250"/>
    <property type="project" value="UniProtKB"/>
</dbReference>
<dbReference type="GO" id="GO:0061298">
    <property type="term" value="P:retina vasculature development in camera-type eye"/>
    <property type="evidence" value="ECO:0000315"/>
    <property type="project" value="MGI"/>
</dbReference>
<dbReference type="GO" id="GO:0031929">
    <property type="term" value="P:TOR signaling"/>
    <property type="evidence" value="ECO:0000315"/>
    <property type="project" value="MGI"/>
</dbReference>
<dbReference type="GO" id="GO:0010573">
    <property type="term" value="P:vascular endothelial growth factor production"/>
    <property type="evidence" value="ECO:0007669"/>
    <property type="project" value="Ensembl"/>
</dbReference>
<dbReference type="GO" id="GO:0001944">
    <property type="term" value="P:vasculature development"/>
    <property type="evidence" value="ECO:0000316"/>
    <property type="project" value="MGI"/>
</dbReference>
<dbReference type="GO" id="GO:0008542">
    <property type="term" value="P:visual learning"/>
    <property type="evidence" value="ECO:0000315"/>
    <property type="project" value="MGI"/>
</dbReference>
<dbReference type="CDD" id="cd19727">
    <property type="entry name" value="bHLH-PAS_HIF1a_PASD8"/>
    <property type="match status" value="1"/>
</dbReference>
<dbReference type="CDD" id="cd00130">
    <property type="entry name" value="PAS"/>
    <property type="match status" value="2"/>
</dbReference>
<dbReference type="FunFam" id="3.30.450.20:FF:000005">
    <property type="entry name" value="Hypoxia-inducible factor 1 subunit alpha"/>
    <property type="match status" value="1"/>
</dbReference>
<dbReference type="FunFam" id="3.30.450.20:FF:000015">
    <property type="entry name" value="Hypoxia-inducible factor 1-alpha isoform 1"/>
    <property type="match status" value="1"/>
</dbReference>
<dbReference type="FunFam" id="4.10.280.10:FF:000076">
    <property type="entry name" value="hypoxia-inducible factor 3-alpha isoform X1"/>
    <property type="match status" value="1"/>
</dbReference>
<dbReference type="Gene3D" id="4.10.280.10">
    <property type="entry name" value="Helix-loop-helix DNA-binding domain"/>
    <property type="match status" value="1"/>
</dbReference>
<dbReference type="Gene3D" id="3.30.450.20">
    <property type="entry name" value="PAS domain"/>
    <property type="match status" value="2"/>
</dbReference>
<dbReference type="IDEAL" id="IID50330"/>
<dbReference type="InterPro" id="IPR011598">
    <property type="entry name" value="bHLH_dom"/>
</dbReference>
<dbReference type="InterPro" id="IPR001321">
    <property type="entry name" value="HIF-1_alpha"/>
</dbReference>
<dbReference type="InterPro" id="IPR014887">
    <property type="entry name" value="HIF-1_CTAD"/>
</dbReference>
<dbReference type="InterPro" id="IPR021537">
    <property type="entry name" value="HIF_alpha-like"/>
</dbReference>
<dbReference type="InterPro" id="IPR036638">
    <property type="entry name" value="HLH_DNA-bd_sf"/>
</dbReference>
<dbReference type="InterPro" id="IPR001610">
    <property type="entry name" value="PAC"/>
</dbReference>
<dbReference type="InterPro" id="IPR000014">
    <property type="entry name" value="PAS"/>
</dbReference>
<dbReference type="InterPro" id="IPR035965">
    <property type="entry name" value="PAS-like_dom_sf"/>
</dbReference>
<dbReference type="InterPro" id="IPR013767">
    <property type="entry name" value="PAS_fold"/>
</dbReference>
<dbReference type="InterPro" id="IPR013655">
    <property type="entry name" value="PAS_fold_3"/>
</dbReference>
<dbReference type="NCBIfam" id="TIGR00229">
    <property type="entry name" value="sensory_box"/>
    <property type="match status" value="2"/>
</dbReference>
<dbReference type="PANTHER" id="PTHR23043">
    <property type="entry name" value="HYPOXIA-INDUCIBLE FACTOR 1 ALPHA"/>
    <property type="match status" value="1"/>
</dbReference>
<dbReference type="PANTHER" id="PTHR23043:SF7">
    <property type="entry name" value="HYPOXIA-INDUCIBLE FACTOR 1-ALPHA"/>
    <property type="match status" value="1"/>
</dbReference>
<dbReference type="Pfam" id="PF23171">
    <property type="entry name" value="bHLH_HIF1A"/>
    <property type="match status" value="1"/>
</dbReference>
<dbReference type="Pfam" id="PF11413">
    <property type="entry name" value="HIF-1"/>
    <property type="match status" value="1"/>
</dbReference>
<dbReference type="Pfam" id="PF08778">
    <property type="entry name" value="HIF-1a_CTAD"/>
    <property type="match status" value="1"/>
</dbReference>
<dbReference type="Pfam" id="PF00989">
    <property type="entry name" value="PAS"/>
    <property type="match status" value="1"/>
</dbReference>
<dbReference type="Pfam" id="PF08447">
    <property type="entry name" value="PAS_3"/>
    <property type="match status" value="1"/>
</dbReference>
<dbReference type="PRINTS" id="PR01080">
    <property type="entry name" value="HYPOXIAIF1A"/>
</dbReference>
<dbReference type="SMART" id="SM00353">
    <property type="entry name" value="HLH"/>
    <property type="match status" value="1"/>
</dbReference>
<dbReference type="SMART" id="SM00086">
    <property type="entry name" value="PAC"/>
    <property type="match status" value="1"/>
</dbReference>
<dbReference type="SMART" id="SM00091">
    <property type="entry name" value="PAS"/>
    <property type="match status" value="2"/>
</dbReference>
<dbReference type="SUPFAM" id="SSF47459">
    <property type="entry name" value="HLH, helix-loop-helix DNA-binding domain"/>
    <property type="match status" value="1"/>
</dbReference>
<dbReference type="SUPFAM" id="SSF55785">
    <property type="entry name" value="PYP-like sensor domain (PAS domain)"/>
    <property type="match status" value="2"/>
</dbReference>
<dbReference type="PROSITE" id="PS50888">
    <property type="entry name" value="BHLH"/>
    <property type="match status" value="1"/>
</dbReference>
<dbReference type="PROSITE" id="PS50112">
    <property type="entry name" value="PAS"/>
    <property type="match status" value="2"/>
</dbReference>
<proteinExistence type="evidence at protein level"/>
<comment type="function">
    <text evidence="1 7 9 12 13">Functions as a master transcriptional regulator of the adaptive response to hypoxia (PubMed:15225651, PubMed:17981124, PubMed:22009797). Under hypoxic conditions, activates the transcription of over 40 genes, including erythropoietin, glucose transporters, glycolytic enzymes, vascular endothelial growth factor, HILPDA, and other genes whose protein products increase oxygen delivery or facilitate metabolic adaptation to hypoxia (PubMed:15225651, PubMed:17981124, PubMed:22009797). Plays an essential role in embryonic vascularization, tumor angiogenesis and pathophysiology of ischemic disease (PubMed:22009797). Heterodimerizes with ARNT; heterodimer binds to core DNA sequence 5'-TACGTG-3' within the hypoxia response element (HRE) of target gene promoters (PubMed:26245371). Activation requires recruitment of transcriptional coactivators such as CREBBP and EP300. Activity is enhanced by interaction with NCOA1 and/or NCOA2. Interaction with redox regulatory protein APEX1 seems to activate CTAD and potentiates activation by NCOA1 and CREBBP. Involved in the axonal distribution and transport of mitochondria in neurons during hypoxia (By similarity).</text>
</comment>
<comment type="activity regulation">
    <text evidence="1">Induced by reactive oxygen species (ROS).</text>
</comment>
<comment type="subunit">
    <text evidence="1 6 8 9 11 13">Interacts with the ARNT; forms a heterodimer that binds core DNA sequence 5'-TACGTG-3' within the hypoxia response element (HRE) of target gene promoters (PubMed:26245371). Interacts with COPS5; the interaction increases the transcriptional activity of HIF1A through increased stability (PubMed:11707426). Interacts with EP300 (via TAZ-type 1 domains); the interaction is stimulated in response to hypoxia and inhibited by CITED2. Interacts with CREBBP (via TAZ-type 1 domains). Interacts with NCOA1, NCOA2, APEX1 and HSP90. Interacts (hydroxylated within the ODD domain) with VHLL (via beta domain); the interaction, leads to polyubiquitination and subsequent HIF1A proteasomal degradation. During hypoxia, sumoylated HIF1A also binds VHL; the interaction promotes the ubiquitination of HIF1A (By similarity). Interacts with SENP1; the interaction desumoylates HIF1A resulting in stabilization and activation of transcription (PubMed:17981124). Interacts (via the ODD domain) with NAA10; the interaction appears not to acetylate HIF1A nor have any affect on protein stability, during hypoxia. Interacts with RWDD3; the interaction enhances HIF1A sumoylation (By similarity). Interacts with TSGA10 (PubMed:16777103). Interacts with HIF3A (PubMed:21546903). Interacts with RORA (via the DNA binding domain); the interaction enhances HIF1A transcription under hypoxia through increasing protein stability. Interaction with PSMA7 inhibits the transactivation activity of HIF1A under both normoxic and hypoxia-mimicking conditions. Interacts with USP20. Interacts with RACK1; promotes HIF1A ubiquitination and proteasome-mediated degradation. Interacts (via N-terminus) with USP19. Interacts with SIRT2. Interacts (deacetylated form) with EGLN1. Interacts with CBFA2T3. Interacts with HSP90AA1 and HSP90AB1. Interacts with DCUN1D1; this interaction increases the interaction between VHL and DCUN1D1. Interacts with HIF1AN (By similarity).</text>
</comment>
<comment type="interaction">
    <interactant intactId="EBI-298954">
        <id>Q61221</id>
    </interactant>
    <interactant intactId="EBI-78852">
        <id>P53762</id>
        <label>Arnt</label>
    </interactant>
    <organismsDiffer>false</organismsDiffer>
    <experiments>6</experiments>
</comment>
<comment type="interaction">
    <interactant intactId="EBI-298954">
        <id>Q61221</id>
    </interactant>
    <interactant intactId="EBI-2893341">
        <id>P35583</id>
        <label>Foxa2</label>
    </interactant>
    <organismsDiffer>false</organismsDiffer>
    <experiments>5</experiments>
</comment>
<comment type="interaction">
    <interactant intactId="EBI-298954">
        <id>Q61221</id>
    </interactant>
    <interactant intactId="EBI-4567146">
        <id>Q8BIF2</id>
        <label>Rbfox3</label>
    </interactant>
    <organismsDiffer>false</organismsDiffer>
    <experiments>2</experiments>
</comment>
<comment type="interaction">
    <interactant intactId="EBI-298954">
        <id>Q61221</id>
    </interactant>
    <interactant intactId="EBI-4422078">
        <id>P51450-2</id>
        <label>Rorc</label>
    </interactant>
    <organismsDiffer>false</organismsDiffer>
    <experiments>2</experiments>
</comment>
<comment type="interaction">
    <interactant intactId="EBI-298954">
        <id>Q61221</id>
    </interactant>
    <interactant intactId="EBI-447295">
        <id>Q09472</id>
        <label>EP300</label>
    </interactant>
    <organismsDiffer>true</organismsDiffer>
    <experiments>2</experiments>
</comment>
<comment type="interaction">
    <interactant intactId="EBI-298954">
        <id>Q61221</id>
    </interactant>
    <interactant intactId="EBI-301246">
        <id>P40337</id>
        <label>VHL</label>
    </interactant>
    <organismsDiffer>true</organismsDiffer>
    <experiments>2</experiments>
</comment>
<comment type="interaction">
    <interactant intactId="EBI-8549331">
        <id>Q61221-1</id>
    </interactant>
    <interactant intactId="EBI-78852">
        <id>P53762</id>
        <label>Arnt</label>
    </interactant>
    <organismsDiffer>false</organismsDiffer>
    <experiments>5</experiments>
</comment>
<comment type="interaction">
    <interactant intactId="EBI-8549331">
        <id>Q61221-1</id>
    </interactant>
    <interactant intactId="EBI-8549230">
        <id>Q6NY15</id>
        <label>Tsga10</label>
    </interactant>
    <organismsDiffer>false</organismsDiffer>
    <experiments>2</experiments>
</comment>
<comment type="subcellular location">
    <subcellularLocation>
        <location evidence="7">Cytoplasm</location>
    </subcellularLocation>
    <subcellularLocation>
        <location evidence="7 11">Nucleus</location>
    </subcellularLocation>
    <subcellularLocation>
        <location evidence="11">Nucleus speckle</location>
    </subcellularLocation>
    <text evidence="1 11">Colocalizes with HIF3A isoform 2 in the nucleus and speckles (PubMed:21546903). Cytoplasmic in normoxia, nuclear translocation in response to hypoxia (By similarity).</text>
</comment>
<comment type="alternative products">
    <event type="alternative splicing"/>
    <isoform>
        <id>Q61221-1</id>
        <name>1</name>
        <sequence type="displayed"/>
    </isoform>
    <isoform>
        <id>Q61221-2</id>
        <name>2</name>
        <sequence type="described" ref="VSP_007739"/>
    </isoform>
</comment>
<comment type="tissue specificity">
    <text>Ubiquitous.</text>
</comment>
<comment type="domain">
    <text evidence="1">Contains two independent C-terminal transactivation domains, NTAD and CTAD, which function synergistically. Their transcriptional activity is repressed by an intervening inhibitory domain (ID) (By similarity).</text>
</comment>
<comment type="PTM">
    <text evidence="1">S-nitrosylation of Cys-810 may be responsible for increased recruitment of p300 coactivator necessary for transcriptional activity of HIF-1 complex.</text>
</comment>
<comment type="PTM">
    <text evidence="1 10">Requires phosphorylation for DNA-binding. Phosphorylation at Ser-247 by CSNK1D/CK1 represses kinase activity and impairs ARNT binding (By similarity). Phosphorylation by GSK3-beta and PLK3 promote degradation by the proteasome (PubMed:20889502).</text>
</comment>
<comment type="PTM">
    <text evidence="1 7 9 15">Sumoylated; with SUMO1 under hypoxia (PubMed:15225651, PubMed:17981124). Sumoylation is enhanced through interaction with RWDD3 (By similarity). Both sumoylation and desumoylation seem to be involved in the regulation of its stability during hypoxia (PubMed:15225651, PubMed:17981124). Sumoylation can promote either its stabilization or its VHL-dependent degradation by promoting hydroxyproline-independent HIF1A-VHL complex binding, thus leading to HIF1A ubiquitination and proteasomal degradation (By similarity). Desumoylation by SENP1 increases its stability amd transcriptional activity (PubMed:17981124). There is a disaccord between various publications on the effect of sumoylation and desumoylation on its stability and transcriptional activity (Probable).</text>
</comment>
<comment type="PTM">
    <text evidence="1">Acetylation of Lys-545 by ARD1 increases interaction with VHL and stimulates subsequent proteasomal degradation (By similarity). Deacetylation of Lys-719 by SIRT2 increases its interaction with and hydroxylation by EGLN1 thereby inactivating HIF1A activity by inducing its proteasomal degradation (By similarity).</text>
</comment>
<comment type="PTM">
    <text evidence="1">Ubiquitinated; in normoxia, following hydroxylation and interaction with VHL. Lys-545 appears to be the principal site of ubiquitination. Clioquinol, the Cu/Zn-chelator, inhibits ubiquitination through preventing hydroxylation at Asn-813. Ubiquitinated by E3 ligase VHL. Deubiquitinated by UCHL1 (By similarity).</text>
</comment>
<comment type="PTM">
    <text evidence="1">The iron and 2-oxoglutarate dependent 3-hydroxylation of asparagine is (S) stereospecific within HIF CTAD domains.</text>
</comment>
<comment type="PTM">
    <text evidence="1">In normoxia, is hydroxylated on Pro-402 and Pro-577 in the oxygen-dependent degradation domain (ODD) by EGLN1/PHD2 and EGLN2/PHD1. EGLN3/PHD3 has also been shown to hydroxylate Pro-577. The hydroxylated prolines promote interaction with VHL, initiating rapid ubiquitination and subsequent proteasomal degradation. Deubiquitinated by USP20. Under hypoxia, proline hydroxylation is impaired and ubiquitination is attenuated, resulting in stabilization (By similarity). In normoxia, is hydroxylated on Asn-813 by HIF1AN, thus abrogating interaction with CREBBP and EP300 and preventing transcriptional activation. Repressed by iron ion, via Fe(2+) prolyl hydroxylase (PHD) enzymes-mediated hydroxylation and subsequent proteasomal degradation.</text>
</comment>
<evidence type="ECO:0000250" key="1">
    <source>
        <dbReference type="UniProtKB" id="Q16665"/>
    </source>
</evidence>
<evidence type="ECO:0000255" key="2"/>
<evidence type="ECO:0000255" key="3">
    <source>
        <dbReference type="PROSITE-ProRule" id="PRU00140"/>
    </source>
</evidence>
<evidence type="ECO:0000255" key="4">
    <source>
        <dbReference type="PROSITE-ProRule" id="PRU00981"/>
    </source>
</evidence>
<evidence type="ECO:0000256" key="5">
    <source>
        <dbReference type="SAM" id="MobiDB-lite"/>
    </source>
</evidence>
<evidence type="ECO:0000269" key="6">
    <source>
    </source>
</evidence>
<evidence type="ECO:0000269" key="7">
    <source>
    </source>
</evidence>
<evidence type="ECO:0000269" key="8">
    <source>
    </source>
</evidence>
<evidence type="ECO:0000269" key="9">
    <source>
    </source>
</evidence>
<evidence type="ECO:0000269" key="10">
    <source>
    </source>
</evidence>
<evidence type="ECO:0000269" key="11">
    <source>
    </source>
</evidence>
<evidence type="ECO:0000269" key="12">
    <source>
    </source>
</evidence>
<evidence type="ECO:0000269" key="13">
    <source>
    </source>
</evidence>
<evidence type="ECO:0000303" key="14">
    <source>
    </source>
</evidence>
<evidence type="ECO:0000305" key="15"/>
<evidence type="ECO:0007744" key="16">
    <source>
        <dbReference type="PDB" id="4ZPR"/>
    </source>
</evidence>